<protein>
    <recommendedName>
        <fullName evidence="1">Sec-independent protein translocase protein TatA</fullName>
    </recommendedName>
</protein>
<organism>
    <name type="scientific">Aliivibrio fischeri (strain ATCC 700601 / ES114)</name>
    <name type="common">Vibrio fischeri</name>
    <dbReference type="NCBI Taxonomy" id="312309"/>
    <lineage>
        <taxon>Bacteria</taxon>
        <taxon>Pseudomonadati</taxon>
        <taxon>Pseudomonadota</taxon>
        <taxon>Gammaproteobacteria</taxon>
        <taxon>Vibrionales</taxon>
        <taxon>Vibrionaceae</taxon>
        <taxon>Aliivibrio</taxon>
    </lineage>
</organism>
<reference key="1">
    <citation type="journal article" date="2005" name="Proc. Natl. Acad. Sci. U.S.A.">
        <title>Complete genome sequence of Vibrio fischeri: a symbiotic bacterium with pathogenic congeners.</title>
        <authorList>
            <person name="Ruby E.G."/>
            <person name="Urbanowski M."/>
            <person name="Campbell J."/>
            <person name="Dunn A."/>
            <person name="Faini M."/>
            <person name="Gunsalus R."/>
            <person name="Lostroh P."/>
            <person name="Lupp C."/>
            <person name="McCann J."/>
            <person name="Millikan D."/>
            <person name="Schaefer A."/>
            <person name="Stabb E."/>
            <person name="Stevens A."/>
            <person name="Visick K."/>
            <person name="Whistler C."/>
            <person name="Greenberg E.P."/>
        </authorList>
    </citation>
    <scope>NUCLEOTIDE SEQUENCE [LARGE SCALE GENOMIC DNA]</scope>
    <source>
        <strain>ATCC 700601 / ES114</strain>
    </source>
</reference>
<comment type="function">
    <text evidence="1">Part of the twin-arginine translocation (Tat) system that transports large folded proteins containing a characteristic twin-arginine motif in their signal peptide across membranes. TatA could form the protein-conducting channel of the Tat system.</text>
</comment>
<comment type="subunit">
    <text evidence="1">The Tat system comprises two distinct complexes: a TatABC complex, containing multiple copies of TatA, TatB and TatC subunits, and a separate TatA complex, containing only TatA subunits. Substrates initially bind to the TatABC complex, which probably triggers association of the separate TatA complex to form the active translocon.</text>
</comment>
<comment type="subcellular location">
    <subcellularLocation>
        <location evidence="1">Cell inner membrane</location>
        <topology evidence="1">Single-pass membrane protein</topology>
    </subcellularLocation>
</comment>
<comment type="similarity">
    <text evidence="1">Belongs to the TatA/E family.</text>
</comment>
<feature type="chain" id="PRO_0000097962" description="Sec-independent protein translocase protein TatA">
    <location>
        <begin position="1"/>
        <end position="82"/>
    </location>
</feature>
<feature type="transmembrane region" description="Helical" evidence="1">
    <location>
        <begin position="1"/>
        <end position="21"/>
    </location>
</feature>
<feature type="region of interest" description="Disordered" evidence="2">
    <location>
        <begin position="48"/>
        <end position="82"/>
    </location>
</feature>
<keyword id="KW-0997">Cell inner membrane</keyword>
<keyword id="KW-1003">Cell membrane</keyword>
<keyword id="KW-0472">Membrane</keyword>
<keyword id="KW-0653">Protein transport</keyword>
<keyword id="KW-1185">Reference proteome</keyword>
<keyword id="KW-0811">Translocation</keyword>
<keyword id="KW-0812">Transmembrane</keyword>
<keyword id="KW-1133">Transmembrane helix</keyword>
<keyword id="KW-0813">Transport</keyword>
<proteinExistence type="inferred from homology"/>
<accession>Q5E8V2</accession>
<gene>
    <name evidence="1" type="primary">tatA</name>
    <name type="ordered locus">VF_0049</name>
</gene>
<evidence type="ECO:0000255" key="1">
    <source>
        <dbReference type="HAMAP-Rule" id="MF_00236"/>
    </source>
</evidence>
<evidence type="ECO:0000256" key="2">
    <source>
        <dbReference type="SAM" id="MobiDB-lite"/>
    </source>
</evidence>
<name>TATA_ALIF1</name>
<sequence>MGGISIWQLLIIAVIIVLLFGTKKLRGVGSDLGSAVKGFKKAISEDEPAKEAKKDADFVPQNLEKKEAETVEKQKQNDKEQA</sequence>
<dbReference type="EMBL" id="CP000020">
    <property type="protein sequence ID" value="AAW84544.1"/>
    <property type="molecule type" value="Genomic_DNA"/>
</dbReference>
<dbReference type="RefSeq" id="WP_011260926.1">
    <property type="nucleotide sequence ID" value="NC_006840.2"/>
</dbReference>
<dbReference type="RefSeq" id="YP_203432.1">
    <property type="nucleotide sequence ID" value="NC_006840.2"/>
</dbReference>
<dbReference type="SMR" id="Q5E8V2"/>
<dbReference type="STRING" id="312309.VF_0049"/>
<dbReference type="EnsemblBacteria" id="AAW84544">
    <property type="protein sequence ID" value="AAW84544"/>
    <property type="gene ID" value="VF_0049"/>
</dbReference>
<dbReference type="GeneID" id="54162678"/>
<dbReference type="KEGG" id="vfi:VF_0049"/>
<dbReference type="PATRIC" id="fig|312309.11.peg.50"/>
<dbReference type="eggNOG" id="COG1826">
    <property type="taxonomic scope" value="Bacteria"/>
</dbReference>
<dbReference type="HOGENOM" id="CLU_086034_5_1_6"/>
<dbReference type="OrthoDB" id="7066617at2"/>
<dbReference type="Proteomes" id="UP000000537">
    <property type="component" value="Chromosome I"/>
</dbReference>
<dbReference type="GO" id="GO:0033281">
    <property type="term" value="C:TAT protein transport complex"/>
    <property type="evidence" value="ECO:0007669"/>
    <property type="project" value="UniProtKB-UniRule"/>
</dbReference>
<dbReference type="GO" id="GO:0008320">
    <property type="term" value="F:protein transmembrane transporter activity"/>
    <property type="evidence" value="ECO:0007669"/>
    <property type="project" value="UniProtKB-UniRule"/>
</dbReference>
<dbReference type="GO" id="GO:0043953">
    <property type="term" value="P:protein transport by the Tat complex"/>
    <property type="evidence" value="ECO:0007669"/>
    <property type="project" value="UniProtKB-UniRule"/>
</dbReference>
<dbReference type="Gene3D" id="1.20.5.3310">
    <property type="match status" value="1"/>
</dbReference>
<dbReference type="HAMAP" id="MF_00236">
    <property type="entry name" value="TatA_E"/>
    <property type="match status" value="1"/>
</dbReference>
<dbReference type="InterPro" id="IPR003369">
    <property type="entry name" value="TatA/B/E"/>
</dbReference>
<dbReference type="InterPro" id="IPR006312">
    <property type="entry name" value="TatA/E"/>
</dbReference>
<dbReference type="NCBIfam" id="NF002813">
    <property type="entry name" value="PRK02958.1"/>
    <property type="match status" value="1"/>
</dbReference>
<dbReference type="NCBIfam" id="NF003396">
    <property type="entry name" value="PRK04598.1"/>
    <property type="match status" value="1"/>
</dbReference>
<dbReference type="NCBIfam" id="TIGR01411">
    <property type="entry name" value="tatAE"/>
    <property type="match status" value="1"/>
</dbReference>
<dbReference type="PANTHER" id="PTHR42982">
    <property type="entry name" value="SEC-INDEPENDENT PROTEIN TRANSLOCASE PROTEIN TATA"/>
    <property type="match status" value="1"/>
</dbReference>
<dbReference type="PANTHER" id="PTHR42982:SF1">
    <property type="entry name" value="SEC-INDEPENDENT PROTEIN TRANSLOCASE PROTEIN TATA"/>
    <property type="match status" value="1"/>
</dbReference>
<dbReference type="Pfam" id="PF02416">
    <property type="entry name" value="TatA_B_E"/>
    <property type="match status" value="1"/>
</dbReference>